<dbReference type="EMBL" id="CR382122">
    <property type="protein sequence ID" value="CAH02463.1"/>
    <property type="molecule type" value="Genomic_DNA"/>
</dbReference>
<dbReference type="RefSeq" id="XP_452070.1">
    <property type="nucleotide sequence ID" value="XM_452070.1"/>
</dbReference>
<dbReference type="SMR" id="Q6CVG9"/>
<dbReference type="FunCoup" id="Q6CVG9">
    <property type="interactions" value="185"/>
</dbReference>
<dbReference type="STRING" id="284590.Q6CVG9"/>
<dbReference type="PaxDb" id="284590-Q6CVG9"/>
<dbReference type="KEGG" id="kla:KLLA0_B12133g"/>
<dbReference type="eggNOG" id="ENOG502QVZE">
    <property type="taxonomic scope" value="Eukaryota"/>
</dbReference>
<dbReference type="HOGENOM" id="CLU_272501_0_0_1"/>
<dbReference type="InParanoid" id="Q6CVG9"/>
<dbReference type="OMA" id="EIDVHYF"/>
<dbReference type="Proteomes" id="UP000000598">
    <property type="component" value="Chromosome B"/>
</dbReference>
<dbReference type="GO" id="GO:1990316">
    <property type="term" value="C:Atg1/ULK1 kinase complex"/>
    <property type="evidence" value="ECO:0007669"/>
    <property type="project" value="TreeGrafter"/>
</dbReference>
<dbReference type="GO" id="GO:0034045">
    <property type="term" value="C:phagophore assembly site membrane"/>
    <property type="evidence" value="ECO:0007669"/>
    <property type="project" value="UniProtKB-SubCell"/>
</dbReference>
<dbReference type="GO" id="GO:0005774">
    <property type="term" value="C:vacuolar membrane"/>
    <property type="evidence" value="ECO:0007669"/>
    <property type="project" value="UniProtKB-SubCell"/>
</dbReference>
<dbReference type="GO" id="GO:0060090">
    <property type="term" value="F:molecular adaptor activity"/>
    <property type="evidence" value="ECO:0007669"/>
    <property type="project" value="TreeGrafter"/>
</dbReference>
<dbReference type="GO" id="GO:0019901">
    <property type="term" value="F:protein kinase binding"/>
    <property type="evidence" value="ECO:0007669"/>
    <property type="project" value="TreeGrafter"/>
</dbReference>
<dbReference type="GO" id="GO:0000045">
    <property type="term" value="P:autophagosome assembly"/>
    <property type="evidence" value="ECO:0007669"/>
    <property type="project" value="InterPro"/>
</dbReference>
<dbReference type="GO" id="GO:0000422">
    <property type="term" value="P:autophagy of mitochondrion"/>
    <property type="evidence" value="ECO:0007669"/>
    <property type="project" value="TreeGrafter"/>
</dbReference>
<dbReference type="GO" id="GO:0034727">
    <property type="term" value="P:piecemeal microautophagy of the nucleus"/>
    <property type="evidence" value="ECO:0007669"/>
    <property type="project" value="TreeGrafter"/>
</dbReference>
<dbReference type="GO" id="GO:0015031">
    <property type="term" value="P:protein transport"/>
    <property type="evidence" value="ECO:0007669"/>
    <property type="project" value="UniProtKB-KW"/>
</dbReference>
<dbReference type="GO" id="GO:0061709">
    <property type="term" value="P:reticulophagy"/>
    <property type="evidence" value="ECO:0007669"/>
    <property type="project" value="TreeGrafter"/>
</dbReference>
<dbReference type="GO" id="GO:0034517">
    <property type="term" value="P:ribophagy"/>
    <property type="evidence" value="ECO:0007669"/>
    <property type="project" value="TreeGrafter"/>
</dbReference>
<dbReference type="InterPro" id="IPR040040">
    <property type="entry name" value="ATG11"/>
</dbReference>
<dbReference type="InterPro" id="IPR019460">
    <property type="entry name" value="Atg11_C"/>
</dbReference>
<dbReference type="InterPro" id="IPR045326">
    <property type="entry name" value="ATG17-like_dom"/>
</dbReference>
<dbReference type="PANTHER" id="PTHR13222">
    <property type="entry name" value="RB1-INDUCIBLE COILED-COIL"/>
    <property type="match status" value="1"/>
</dbReference>
<dbReference type="PANTHER" id="PTHR13222:SF1">
    <property type="entry name" value="RB1-INDUCIBLE COILED-COIL PROTEIN 1"/>
    <property type="match status" value="1"/>
</dbReference>
<dbReference type="Pfam" id="PF10377">
    <property type="entry name" value="ATG11"/>
    <property type="match status" value="1"/>
</dbReference>
<dbReference type="Pfam" id="PF04108">
    <property type="entry name" value="ATG17_like"/>
    <property type="match status" value="1"/>
</dbReference>
<reference key="1">
    <citation type="journal article" date="2004" name="Nature">
        <title>Genome evolution in yeasts.</title>
        <authorList>
            <person name="Dujon B."/>
            <person name="Sherman D."/>
            <person name="Fischer G."/>
            <person name="Durrens P."/>
            <person name="Casaregola S."/>
            <person name="Lafontaine I."/>
            <person name="de Montigny J."/>
            <person name="Marck C."/>
            <person name="Neuveglise C."/>
            <person name="Talla E."/>
            <person name="Goffard N."/>
            <person name="Frangeul L."/>
            <person name="Aigle M."/>
            <person name="Anthouard V."/>
            <person name="Babour A."/>
            <person name="Barbe V."/>
            <person name="Barnay S."/>
            <person name="Blanchin S."/>
            <person name="Beckerich J.-M."/>
            <person name="Beyne E."/>
            <person name="Bleykasten C."/>
            <person name="Boisrame A."/>
            <person name="Boyer J."/>
            <person name="Cattolico L."/>
            <person name="Confanioleri F."/>
            <person name="de Daruvar A."/>
            <person name="Despons L."/>
            <person name="Fabre E."/>
            <person name="Fairhead C."/>
            <person name="Ferry-Dumazet H."/>
            <person name="Groppi A."/>
            <person name="Hantraye F."/>
            <person name="Hennequin C."/>
            <person name="Jauniaux N."/>
            <person name="Joyet P."/>
            <person name="Kachouri R."/>
            <person name="Kerrest A."/>
            <person name="Koszul R."/>
            <person name="Lemaire M."/>
            <person name="Lesur I."/>
            <person name="Ma L."/>
            <person name="Muller H."/>
            <person name="Nicaud J.-M."/>
            <person name="Nikolski M."/>
            <person name="Oztas S."/>
            <person name="Ozier-Kalogeropoulos O."/>
            <person name="Pellenz S."/>
            <person name="Potier S."/>
            <person name="Richard G.-F."/>
            <person name="Straub M.-L."/>
            <person name="Suleau A."/>
            <person name="Swennen D."/>
            <person name="Tekaia F."/>
            <person name="Wesolowski-Louvel M."/>
            <person name="Westhof E."/>
            <person name="Wirth B."/>
            <person name="Zeniou-Meyer M."/>
            <person name="Zivanovic Y."/>
            <person name="Bolotin-Fukuhara M."/>
            <person name="Thierry A."/>
            <person name="Bouchier C."/>
            <person name="Caudron B."/>
            <person name="Scarpelli C."/>
            <person name="Gaillardin C."/>
            <person name="Weissenbach J."/>
            <person name="Wincker P."/>
            <person name="Souciet J.-L."/>
        </authorList>
    </citation>
    <scope>NUCLEOTIDE SEQUENCE [LARGE SCALE GENOMIC DNA]</scope>
    <source>
        <strain>ATCC 8585 / CBS 2359 / DSM 70799 / NBRC 1267 / NRRL Y-1140 / WM37</strain>
    </source>
</reference>
<evidence type="ECO:0000250" key="1"/>
<evidence type="ECO:0000255" key="2"/>
<evidence type="ECO:0000305" key="3"/>
<comment type="function">
    <text evidence="1">Involved in cytoplasm to vacuole transport (Cvt), pexophagy, mitophagy and nucleophagy. Recruits mitochondria for their selective degradation via autophagy (mitophagy) during starvation. Works as scaffold proteins that recruit ATG proteins to the pre-autophagosome (PAS), the site of vesicle/autophagosome formation. Required for the Cvt vesicles completion (By similarity).</text>
</comment>
<comment type="subunit">
    <text evidence="1">Homodimer.</text>
</comment>
<comment type="subcellular location">
    <subcellularLocation>
        <location evidence="1">Preautophagosomal structure membrane</location>
        <topology evidence="1">Peripheral membrane protein</topology>
    </subcellularLocation>
    <subcellularLocation>
        <location evidence="1">Vacuole membrane</location>
        <topology evidence="1">Peripheral membrane protein</topology>
    </subcellularLocation>
    <text evidence="1">During pexophagy, accumulates in the vacuolar membrane region, where the peroxisomes contact the vacuole.</text>
</comment>
<comment type="similarity">
    <text evidence="3">Belongs to the ATG11 family.</text>
</comment>
<feature type="chain" id="PRO_0000124548" description="Autophagy-related protein 11">
    <location>
        <begin position="1"/>
        <end position="1046"/>
    </location>
</feature>
<feature type="coiled-coil region" evidence="2">
    <location>
        <begin position="582"/>
        <end position="730"/>
    </location>
</feature>
<name>ATG11_KLULA</name>
<sequence>MPPCKLICATSGVSHQLSNVYFPSFLDLKQFASDTFQIPLDDILLLLPYGMILKKAGWDSRKLQQEGLEEIYVFDRGIFNEEIEFSPKPRFQLFKPLPSPISDSLQLDKNVILRNLGWLKALQSDVEFFQDVIKETYQDVQRLLECGTVMLEYLKNYCYEVEVLYNGNVDFLNKLHEDGASNQWHSFYDNILGNIKVSNQLLSSFFNYSELTEIEDSIHRLDRELNAKLKELKKSIDECYQQRTQLISDLDDVKKNSVVSSDDMDNQMVERFKEMATEIELVSNQYKEEASKDASKEKFETFKSVHVPKLQTISQAMFNKASTNLDTKATVQQKLQQLYLSVAKSQMSVIMVKSVLTKDVKTNMKFLKNEELKLSQVLDLPMCYGLYLIELYREQLWTDRYSQLRQQHESSLQHLLDDEVRQRNSWYKDFQWITRFLDVDSLLPSSVYIPSISDHKQVTLSQIKDYINQLASLNLGEPTINLLKSKVSQAELTGLHLPTDYALSKDSELIIEGYKARIKKLEHLLLDAQFHQYDSWPAGILNKETAMVQMFRNSTVSTKLQQSSTFDLPSSKQQHESNKTFEEFQNLQKDISKYSELTKTLETELSTLKSQLSHMEVEKNAYRESMTNLNKELSTLLIERENFYSEMNSRSENFKKHLGSLFEQNEELVRESEESRRKSEDLNKMKEDLLVNMATQEVQAEQERASLQEEVESLKKDLNQLQISKSKTIDAEFINFNKQLEKTLYDVFQGSIFILASIGLLLSKDQDGNFQIVRVKGLRKDLDSSLADMNSSMAKSVIAQEIKSTFESIKDQIDYKPHENFITYIEKLFGNQLFETSVIRRFNDIESLAKKLRKENKNKKLLLQKSARDKITIYNFQPGDLALFLPINDQELLLNSSISSLNSSFSSIDLNSSTQSVMQRPNVVKSDIAASILNGSSASITENIPLSKANRNPALNANGRPDTFNVNTQDSAKKHVVWAIFTATNTDIKYVLRNSTSNYELLKDREWAMGRISALEKHVVGDDSKNPFKFPRNTVWYEVDAFFNLD</sequence>
<gene>
    <name type="primary">ATG11</name>
    <name type="ordered locus">KLLA0B12133g</name>
</gene>
<accession>Q6CVG9</accession>
<proteinExistence type="inferred from homology"/>
<organism>
    <name type="scientific">Kluyveromyces lactis (strain ATCC 8585 / CBS 2359 / DSM 70799 / NBRC 1267 / NRRL Y-1140 / WM37)</name>
    <name type="common">Yeast</name>
    <name type="synonym">Candida sphaerica</name>
    <dbReference type="NCBI Taxonomy" id="284590"/>
    <lineage>
        <taxon>Eukaryota</taxon>
        <taxon>Fungi</taxon>
        <taxon>Dikarya</taxon>
        <taxon>Ascomycota</taxon>
        <taxon>Saccharomycotina</taxon>
        <taxon>Saccharomycetes</taxon>
        <taxon>Saccharomycetales</taxon>
        <taxon>Saccharomycetaceae</taxon>
        <taxon>Kluyveromyces</taxon>
    </lineage>
</organism>
<protein>
    <recommendedName>
        <fullName>Autophagy-related protein 11</fullName>
    </recommendedName>
</protein>
<keyword id="KW-0072">Autophagy</keyword>
<keyword id="KW-0175">Coiled coil</keyword>
<keyword id="KW-0472">Membrane</keyword>
<keyword id="KW-0653">Protein transport</keyword>
<keyword id="KW-1185">Reference proteome</keyword>
<keyword id="KW-0813">Transport</keyword>
<keyword id="KW-0926">Vacuole</keyword>